<organism>
    <name type="scientific">Clostridium botulinum (strain Hall / ATCC 3502 / NCTC 13319 / Type A)</name>
    <dbReference type="NCBI Taxonomy" id="441771"/>
    <lineage>
        <taxon>Bacteria</taxon>
        <taxon>Bacillati</taxon>
        <taxon>Bacillota</taxon>
        <taxon>Clostridia</taxon>
        <taxon>Eubacteriales</taxon>
        <taxon>Clostridiaceae</taxon>
        <taxon>Clostridium</taxon>
    </lineage>
</organism>
<reference key="1">
    <citation type="journal article" date="2007" name="Genome Res.">
        <title>Genome sequence of a proteolytic (Group I) Clostridium botulinum strain Hall A and comparative analysis of the clostridial genomes.</title>
        <authorList>
            <person name="Sebaihia M."/>
            <person name="Peck M.W."/>
            <person name="Minton N.P."/>
            <person name="Thomson N.R."/>
            <person name="Holden M.T.G."/>
            <person name="Mitchell W.J."/>
            <person name="Carter A.T."/>
            <person name="Bentley S.D."/>
            <person name="Mason D.R."/>
            <person name="Crossman L."/>
            <person name="Paul C.J."/>
            <person name="Ivens A."/>
            <person name="Wells-Bennik M.H.J."/>
            <person name="Davis I.J."/>
            <person name="Cerdeno-Tarraga A.M."/>
            <person name="Churcher C."/>
            <person name="Quail M.A."/>
            <person name="Chillingworth T."/>
            <person name="Feltwell T."/>
            <person name="Fraser A."/>
            <person name="Goodhead I."/>
            <person name="Hance Z."/>
            <person name="Jagels K."/>
            <person name="Larke N."/>
            <person name="Maddison M."/>
            <person name="Moule S."/>
            <person name="Mungall K."/>
            <person name="Norbertczak H."/>
            <person name="Rabbinowitsch E."/>
            <person name="Sanders M."/>
            <person name="Simmonds M."/>
            <person name="White B."/>
            <person name="Whithead S."/>
            <person name="Parkhill J."/>
        </authorList>
    </citation>
    <scope>NUCLEOTIDE SEQUENCE [LARGE SCALE GENOMIC DNA]</scope>
    <source>
        <strain>Hall / ATCC 3502 / NCTC 13319 / Type A</strain>
    </source>
</reference>
<reference key="2">
    <citation type="journal article" date="2007" name="PLoS ONE">
        <title>Analysis of the neurotoxin complex genes in Clostridium botulinum A1-A4 and B1 strains: BoNT/A3, /Ba4 and /B1 clusters are located within plasmids.</title>
        <authorList>
            <person name="Smith T.J."/>
            <person name="Hill K.K."/>
            <person name="Foley B.T."/>
            <person name="Detter J.C."/>
            <person name="Munk A.C."/>
            <person name="Bruce D.C."/>
            <person name="Doggett N.A."/>
            <person name="Smith L.A."/>
            <person name="Marks J.D."/>
            <person name="Xie G."/>
            <person name="Brettin T.S."/>
        </authorList>
    </citation>
    <scope>NUCLEOTIDE SEQUENCE [LARGE SCALE GENOMIC DNA]</scope>
    <source>
        <strain>Hall / ATCC 3502 / NCTC 13319 / Type A</strain>
    </source>
</reference>
<accession>A5I7X8</accession>
<accession>A7G958</accession>
<name>FABH_CLOBH</name>
<dbReference type="EC" id="2.3.1.180" evidence="1"/>
<dbReference type="EMBL" id="CP000727">
    <property type="protein sequence ID" value="ABS39030.1"/>
    <property type="molecule type" value="Genomic_DNA"/>
</dbReference>
<dbReference type="EMBL" id="AM412317">
    <property type="protein sequence ID" value="CAL85163.1"/>
    <property type="molecule type" value="Genomic_DNA"/>
</dbReference>
<dbReference type="RefSeq" id="WP_012048430.1">
    <property type="nucleotide sequence ID" value="NC_009698.1"/>
</dbReference>
<dbReference type="RefSeq" id="YP_001256083.1">
    <property type="nucleotide sequence ID" value="NC_009495.1"/>
</dbReference>
<dbReference type="RefSeq" id="YP_001389323.1">
    <property type="nucleotide sequence ID" value="NC_009698.1"/>
</dbReference>
<dbReference type="SMR" id="A5I7X8"/>
<dbReference type="GeneID" id="5187781"/>
<dbReference type="KEGG" id="cbh:CLC_3582"/>
<dbReference type="KEGG" id="cbo:CBO3604"/>
<dbReference type="PATRIC" id="fig|413999.7.peg.3581"/>
<dbReference type="HOGENOM" id="CLU_039592_3_1_9"/>
<dbReference type="UniPathway" id="UPA00094"/>
<dbReference type="PRO" id="PR:A5I7X8"/>
<dbReference type="Proteomes" id="UP000001986">
    <property type="component" value="Chromosome"/>
</dbReference>
<dbReference type="GO" id="GO:0005737">
    <property type="term" value="C:cytoplasm"/>
    <property type="evidence" value="ECO:0007669"/>
    <property type="project" value="UniProtKB-SubCell"/>
</dbReference>
<dbReference type="GO" id="GO:0004315">
    <property type="term" value="F:3-oxoacyl-[acyl-carrier-protein] synthase activity"/>
    <property type="evidence" value="ECO:0007669"/>
    <property type="project" value="InterPro"/>
</dbReference>
<dbReference type="GO" id="GO:0033818">
    <property type="term" value="F:beta-ketoacyl-acyl-carrier-protein synthase III activity"/>
    <property type="evidence" value="ECO:0007669"/>
    <property type="project" value="UniProtKB-UniRule"/>
</dbReference>
<dbReference type="GO" id="GO:0006633">
    <property type="term" value="P:fatty acid biosynthetic process"/>
    <property type="evidence" value="ECO:0007669"/>
    <property type="project" value="UniProtKB-UniRule"/>
</dbReference>
<dbReference type="GO" id="GO:0044550">
    <property type="term" value="P:secondary metabolite biosynthetic process"/>
    <property type="evidence" value="ECO:0000318"/>
    <property type="project" value="GO_Central"/>
</dbReference>
<dbReference type="CDD" id="cd00830">
    <property type="entry name" value="KAS_III"/>
    <property type="match status" value="1"/>
</dbReference>
<dbReference type="FunFam" id="3.40.47.10:FF:000004">
    <property type="entry name" value="3-oxoacyl-[acyl-carrier-protein] synthase 3"/>
    <property type="match status" value="1"/>
</dbReference>
<dbReference type="Gene3D" id="3.40.47.10">
    <property type="match status" value="1"/>
</dbReference>
<dbReference type="HAMAP" id="MF_01815">
    <property type="entry name" value="FabH"/>
    <property type="match status" value="1"/>
</dbReference>
<dbReference type="InterPro" id="IPR013747">
    <property type="entry name" value="ACP_syn_III_C"/>
</dbReference>
<dbReference type="InterPro" id="IPR013751">
    <property type="entry name" value="ACP_syn_III_N"/>
</dbReference>
<dbReference type="InterPro" id="IPR004655">
    <property type="entry name" value="FabH"/>
</dbReference>
<dbReference type="InterPro" id="IPR016039">
    <property type="entry name" value="Thiolase-like"/>
</dbReference>
<dbReference type="NCBIfam" id="TIGR00747">
    <property type="entry name" value="fabH"/>
    <property type="match status" value="1"/>
</dbReference>
<dbReference type="NCBIfam" id="NF006829">
    <property type="entry name" value="PRK09352.1"/>
    <property type="match status" value="1"/>
</dbReference>
<dbReference type="PANTHER" id="PTHR34069">
    <property type="entry name" value="3-OXOACYL-[ACYL-CARRIER-PROTEIN] SYNTHASE 3"/>
    <property type="match status" value="1"/>
</dbReference>
<dbReference type="PANTHER" id="PTHR34069:SF2">
    <property type="entry name" value="BETA-KETOACYL-[ACYL-CARRIER-PROTEIN] SYNTHASE III"/>
    <property type="match status" value="1"/>
</dbReference>
<dbReference type="Pfam" id="PF08545">
    <property type="entry name" value="ACP_syn_III"/>
    <property type="match status" value="1"/>
</dbReference>
<dbReference type="Pfam" id="PF08541">
    <property type="entry name" value="ACP_syn_III_C"/>
    <property type="match status" value="1"/>
</dbReference>
<dbReference type="SUPFAM" id="SSF53901">
    <property type="entry name" value="Thiolase-like"/>
    <property type="match status" value="1"/>
</dbReference>
<proteinExistence type="inferred from homology"/>
<keyword id="KW-0012">Acyltransferase</keyword>
<keyword id="KW-0963">Cytoplasm</keyword>
<keyword id="KW-0275">Fatty acid biosynthesis</keyword>
<keyword id="KW-0276">Fatty acid metabolism</keyword>
<keyword id="KW-0444">Lipid biosynthesis</keyword>
<keyword id="KW-0443">Lipid metabolism</keyword>
<keyword id="KW-0511">Multifunctional enzyme</keyword>
<keyword id="KW-1185">Reference proteome</keyword>
<keyword id="KW-0808">Transferase</keyword>
<evidence type="ECO:0000255" key="1">
    <source>
        <dbReference type="HAMAP-Rule" id="MF_01815"/>
    </source>
</evidence>
<gene>
    <name evidence="1" type="primary">fabH</name>
    <name type="ordered locus">CBO3604</name>
    <name type="ordered locus">CLC_3582</name>
</gene>
<protein>
    <recommendedName>
        <fullName evidence="1">Beta-ketoacyl-[acyl-carrier-protein] synthase III</fullName>
        <shortName evidence="1">Beta-ketoacyl-ACP synthase III</shortName>
        <shortName evidence="1">KAS III</shortName>
        <ecNumber evidence="1">2.3.1.180</ecNumber>
    </recommendedName>
    <alternativeName>
        <fullName evidence="1">3-oxoacyl-[acyl-carrier-protein] synthase 3</fullName>
    </alternativeName>
    <alternativeName>
        <fullName evidence="1">3-oxoacyl-[acyl-carrier-protein] synthase III</fullName>
    </alternativeName>
</protein>
<sequence length="326" mass="35813">MSNISVIGTGSYVPNNIITNDFLSTIVDTSDEWIRTRTGILERRISKGENTIYMATESAKEAIKNANIEANDLDLIIVATLTPDNFMPSTACSVQKEIGAMNALCFDISAACSGFIYGLEIACSMLKNSFRNKALIIGAENLSKIVDWEDRNTCVLFGDGAGSAILSKTKEEGILEFHSGSNGLKGEHLTCGVLKANNTPNKNDSLEKNNFIKMNGKEIFRFAVGAMNETIYNIQEKTKWDLNEVKYIISHQANSRIIEYTAKKLNTEKDKFYMNLDKYGNTSAASIPIALDEMNKRGLLNKQDKIILVGFGGGLTFGGVAIVWSI</sequence>
<feature type="chain" id="PRO_1000056344" description="Beta-ketoacyl-[acyl-carrier-protein] synthase III">
    <location>
        <begin position="1"/>
        <end position="326"/>
    </location>
</feature>
<feature type="region of interest" description="ACP-binding" evidence="1">
    <location>
        <begin position="252"/>
        <end position="256"/>
    </location>
</feature>
<feature type="active site" evidence="1">
    <location>
        <position position="112"/>
    </location>
</feature>
<feature type="active site" evidence="1">
    <location>
        <position position="251"/>
    </location>
</feature>
<feature type="active site" evidence="1">
    <location>
        <position position="281"/>
    </location>
</feature>
<comment type="function">
    <text evidence="1">Catalyzes the condensation reaction of fatty acid synthesis by the addition to an acyl acceptor of two carbons from malonyl-ACP. Catalyzes the first condensation reaction which initiates fatty acid synthesis and may therefore play a role in governing the total rate of fatty acid production. Possesses both acetoacetyl-ACP synthase and acetyl transacylase activities. Its substrate specificity determines the biosynthesis of branched-chain and/or straight-chain of fatty acids.</text>
</comment>
<comment type="catalytic activity">
    <reaction evidence="1">
        <text>malonyl-[ACP] + acetyl-CoA + H(+) = 3-oxobutanoyl-[ACP] + CO2 + CoA</text>
        <dbReference type="Rhea" id="RHEA:12080"/>
        <dbReference type="Rhea" id="RHEA-COMP:9623"/>
        <dbReference type="Rhea" id="RHEA-COMP:9625"/>
        <dbReference type="ChEBI" id="CHEBI:15378"/>
        <dbReference type="ChEBI" id="CHEBI:16526"/>
        <dbReference type="ChEBI" id="CHEBI:57287"/>
        <dbReference type="ChEBI" id="CHEBI:57288"/>
        <dbReference type="ChEBI" id="CHEBI:78449"/>
        <dbReference type="ChEBI" id="CHEBI:78450"/>
        <dbReference type="EC" id="2.3.1.180"/>
    </reaction>
</comment>
<comment type="pathway">
    <text evidence="1">Lipid metabolism; fatty acid biosynthesis.</text>
</comment>
<comment type="subunit">
    <text evidence="1">Homodimer.</text>
</comment>
<comment type="subcellular location">
    <subcellularLocation>
        <location evidence="1">Cytoplasm</location>
    </subcellularLocation>
</comment>
<comment type="domain">
    <text evidence="1">The last Arg residue of the ACP-binding site is essential for the weak association between ACP/AcpP and FabH.</text>
</comment>
<comment type="similarity">
    <text evidence="1">Belongs to the thiolase-like superfamily. FabH family.</text>
</comment>